<feature type="chain" id="PRO_1000149689" description="Replication restart protein DnaT">
    <location>
        <begin position="1"/>
        <end position="179"/>
    </location>
</feature>
<feature type="region of interest" description="Disordered" evidence="2">
    <location>
        <begin position="154"/>
        <end position="179"/>
    </location>
</feature>
<protein>
    <recommendedName>
        <fullName evidence="1">Replication restart protein DnaT</fullName>
    </recommendedName>
</protein>
<name>DNAT_ECO27</name>
<keyword id="KW-0235">DNA replication</keyword>
<keyword id="KW-0238">DNA-binding</keyword>
<keyword id="KW-0639">Primosome</keyword>
<keyword id="KW-1185">Reference proteome</keyword>
<sequence length="179" mass="19484">MSSRVLTPDVVGIDALIHDHQTVLAKAEGGVVAVFANNAPAFYAVTPARLAELLALEEKLARPGSDVALDDQLYQEPQAAPVAVPMGKFAMYPDWQPDTDFIRQAALWGVALREPVTAEELASFIAYWQAEGKVFHHVQWQQKLARSLQIGRASNGGLPKRDVNTVSEPDSQIPPGFRG</sequence>
<comment type="function">
    <text evidence="1">Involved in the restart of stalled replication forks, which reloads the replicative helicase on sites other than the origin of replication. Can function in multiple replication restart pathways. Displaces ssDNA from a PriB-ssDNA complex. Probably forms a spiral filament on ssDNA.</text>
</comment>
<comment type="subunit">
    <text evidence="1">Homooligomerizes. Interacts with PriB. Component of the replication restart primosome. Primosome assembly occurs via a 'hand-off' mechanism. PriA binds to replication forks, subsequently PriB then DnaT bind; DnaT then displaces ssDNA to generate the helicase loading substrate.</text>
</comment>
<comment type="similarity">
    <text evidence="1">Belongs to the DnaT family.</text>
</comment>
<proteinExistence type="inferred from homology"/>
<evidence type="ECO:0000255" key="1">
    <source>
        <dbReference type="HAMAP-Rule" id="MF_01061"/>
    </source>
</evidence>
<evidence type="ECO:0000256" key="2">
    <source>
        <dbReference type="SAM" id="MobiDB-lite"/>
    </source>
</evidence>
<reference key="1">
    <citation type="journal article" date="2009" name="J. Bacteriol.">
        <title>Complete genome sequence and comparative genome analysis of enteropathogenic Escherichia coli O127:H6 strain E2348/69.</title>
        <authorList>
            <person name="Iguchi A."/>
            <person name="Thomson N.R."/>
            <person name="Ogura Y."/>
            <person name="Saunders D."/>
            <person name="Ooka T."/>
            <person name="Henderson I.R."/>
            <person name="Harris D."/>
            <person name="Asadulghani M."/>
            <person name="Kurokawa K."/>
            <person name="Dean P."/>
            <person name="Kenny B."/>
            <person name="Quail M.A."/>
            <person name="Thurston S."/>
            <person name="Dougan G."/>
            <person name="Hayashi T."/>
            <person name="Parkhill J."/>
            <person name="Frankel G."/>
        </authorList>
    </citation>
    <scope>NUCLEOTIDE SEQUENCE [LARGE SCALE GENOMIC DNA]</scope>
    <source>
        <strain>E2348/69 / EPEC</strain>
    </source>
</reference>
<gene>
    <name evidence="1" type="primary">dnaT</name>
    <name type="ordered locus">E2348C_4661</name>
</gene>
<accession>B7UQZ1</accession>
<dbReference type="EMBL" id="FM180568">
    <property type="protein sequence ID" value="CAS12209.1"/>
    <property type="molecule type" value="Genomic_DNA"/>
</dbReference>
<dbReference type="RefSeq" id="WP_012579056.1">
    <property type="nucleotide sequence ID" value="NC_011601.1"/>
</dbReference>
<dbReference type="SMR" id="B7UQZ1"/>
<dbReference type="KEGG" id="ecg:E2348C_4661"/>
<dbReference type="HOGENOM" id="CLU_1501592_0_0_6"/>
<dbReference type="Proteomes" id="UP000008205">
    <property type="component" value="Chromosome"/>
</dbReference>
<dbReference type="GO" id="GO:1990077">
    <property type="term" value="C:primosome complex"/>
    <property type="evidence" value="ECO:0007669"/>
    <property type="project" value="UniProtKB-KW"/>
</dbReference>
<dbReference type="GO" id="GO:0006269">
    <property type="term" value="P:DNA replication, synthesis of primer"/>
    <property type="evidence" value="ECO:0007669"/>
    <property type="project" value="UniProtKB-UniRule"/>
</dbReference>
<dbReference type="Gene3D" id="1.10.8.1180">
    <property type="match status" value="1"/>
</dbReference>
<dbReference type="HAMAP" id="MF_01061">
    <property type="entry name" value="DnaT"/>
    <property type="match status" value="1"/>
</dbReference>
<dbReference type="InterPro" id="IPR020917">
    <property type="entry name" value="DnaT"/>
</dbReference>
<dbReference type="InterPro" id="IPR040480">
    <property type="entry name" value="DnaT_DNA_bind"/>
</dbReference>
<dbReference type="NCBIfam" id="NF002770">
    <property type="entry name" value="PRK02854.1"/>
    <property type="match status" value="1"/>
</dbReference>
<dbReference type="Pfam" id="PF17948">
    <property type="entry name" value="DnaT"/>
    <property type="match status" value="1"/>
</dbReference>
<organism>
    <name type="scientific">Escherichia coli O127:H6 (strain E2348/69 / EPEC)</name>
    <dbReference type="NCBI Taxonomy" id="574521"/>
    <lineage>
        <taxon>Bacteria</taxon>
        <taxon>Pseudomonadati</taxon>
        <taxon>Pseudomonadota</taxon>
        <taxon>Gammaproteobacteria</taxon>
        <taxon>Enterobacterales</taxon>
        <taxon>Enterobacteriaceae</taxon>
        <taxon>Escherichia</taxon>
    </lineage>
</organism>